<protein>
    <recommendedName>
        <fullName evidence="1">Pantothenate synthetase</fullName>
        <shortName evidence="1">PS</shortName>
        <ecNumber evidence="1">6.3.2.1</ecNumber>
    </recommendedName>
    <alternativeName>
        <fullName evidence="1">Pantoate--beta-alanine ligase</fullName>
    </alternativeName>
    <alternativeName>
        <fullName evidence="1">Pantoate-activating enzyme</fullName>
    </alternativeName>
</protein>
<keyword id="KW-0067">ATP-binding</keyword>
<keyword id="KW-0963">Cytoplasm</keyword>
<keyword id="KW-0436">Ligase</keyword>
<keyword id="KW-0547">Nucleotide-binding</keyword>
<keyword id="KW-0566">Pantothenate biosynthesis</keyword>
<comment type="function">
    <text evidence="1">Catalyzes the condensation of pantoate with beta-alanine in an ATP-dependent reaction via a pantoyl-adenylate intermediate.</text>
</comment>
<comment type="catalytic activity">
    <reaction evidence="1">
        <text>(R)-pantoate + beta-alanine + ATP = (R)-pantothenate + AMP + diphosphate + H(+)</text>
        <dbReference type="Rhea" id="RHEA:10912"/>
        <dbReference type="ChEBI" id="CHEBI:15378"/>
        <dbReference type="ChEBI" id="CHEBI:15980"/>
        <dbReference type="ChEBI" id="CHEBI:29032"/>
        <dbReference type="ChEBI" id="CHEBI:30616"/>
        <dbReference type="ChEBI" id="CHEBI:33019"/>
        <dbReference type="ChEBI" id="CHEBI:57966"/>
        <dbReference type="ChEBI" id="CHEBI:456215"/>
        <dbReference type="EC" id="6.3.2.1"/>
    </reaction>
</comment>
<comment type="pathway">
    <text evidence="1">Cofactor biosynthesis; (R)-pantothenate biosynthesis; (R)-pantothenate from (R)-pantoate and beta-alanine: step 1/1.</text>
</comment>
<comment type="subunit">
    <text evidence="1">Homodimer.</text>
</comment>
<comment type="subcellular location">
    <subcellularLocation>
        <location evidence="1">Cytoplasm</location>
    </subcellularLocation>
</comment>
<comment type="miscellaneous">
    <text evidence="1">The reaction proceeds by a bi uni uni bi ping pong mechanism.</text>
</comment>
<comment type="similarity">
    <text evidence="1">Belongs to the pantothenate synthetase family.</text>
</comment>
<accession>Q57T74</accession>
<dbReference type="EC" id="6.3.2.1" evidence="1"/>
<dbReference type="EMBL" id="AE017220">
    <property type="protein sequence ID" value="AAX64087.1"/>
    <property type="molecule type" value="Genomic_DNA"/>
</dbReference>
<dbReference type="RefSeq" id="WP_000905348.1">
    <property type="nucleotide sequence ID" value="NC_006905.1"/>
</dbReference>
<dbReference type="SMR" id="Q57T74"/>
<dbReference type="KEGG" id="sec:SCH_0181"/>
<dbReference type="HOGENOM" id="CLU_047148_0_0_6"/>
<dbReference type="UniPathway" id="UPA00028">
    <property type="reaction ID" value="UER00005"/>
</dbReference>
<dbReference type="Proteomes" id="UP000000538">
    <property type="component" value="Chromosome"/>
</dbReference>
<dbReference type="GO" id="GO:0005829">
    <property type="term" value="C:cytosol"/>
    <property type="evidence" value="ECO:0007669"/>
    <property type="project" value="TreeGrafter"/>
</dbReference>
<dbReference type="GO" id="GO:0005524">
    <property type="term" value="F:ATP binding"/>
    <property type="evidence" value="ECO:0007669"/>
    <property type="project" value="UniProtKB-KW"/>
</dbReference>
<dbReference type="GO" id="GO:0004592">
    <property type="term" value="F:pantoate-beta-alanine ligase activity"/>
    <property type="evidence" value="ECO:0007669"/>
    <property type="project" value="UniProtKB-UniRule"/>
</dbReference>
<dbReference type="GO" id="GO:0015940">
    <property type="term" value="P:pantothenate biosynthetic process"/>
    <property type="evidence" value="ECO:0007669"/>
    <property type="project" value="UniProtKB-UniRule"/>
</dbReference>
<dbReference type="CDD" id="cd00560">
    <property type="entry name" value="PanC"/>
    <property type="match status" value="1"/>
</dbReference>
<dbReference type="FunFam" id="3.30.1300.10:FF:000001">
    <property type="entry name" value="Pantothenate synthetase"/>
    <property type="match status" value="1"/>
</dbReference>
<dbReference type="FunFam" id="3.40.50.620:FF:000013">
    <property type="entry name" value="Pantothenate synthetase"/>
    <property type="match status" value="1"/>
</dbReference>
<dbReference type="Gene3D" id="3.40.50.620">
    <property type="entry name" value="HUPs"/>
    <property type="match status" value="1"/>
</dbReference>
<dbReference type="Gene3D" id="3.30.1300.10">
    <property type="entry name" value="Pantoate-beta-alanine ligase, C-terminal domain"/>
    <property type="match status" value="1"/>
</dbReference>
<dbReference type="HAMAP" id="MF_00158">
    <property type="entry name" value="PanC"/>
    <property type="match status" value="1"/>
</dbReference>
<dbReference type="InterPro" id="IPR004821">
    <property type="entry name" value="Cyt_trans-like"/>
</dbReference>
<dbReference type="InterPro" id="IPR003721">
    <property type="entry name" value="Pantoate_ligase"/>
</dbReference>
<dbReference type="InterPro" id="IPR042176">
    <property type="entry name" value="Pantoate_ligase_C"/>
</dbReference>
<dbReference type="InterPro" id="IPR014729">
    <property type="entry name" value="Rossmann-like_a/b/a_fold"/>
</dbReference>
<dbReference type="NCBIfam" id="TIGR00125">
    <property type="entry name" value="cyt_tran_rel"/>
    <property type="match status" value="1"/>
</dbReference>
<dbReference type="NCBIfam" id="TIGR00018">
    <property type="entry name" value="panC"/>
    <property type="match status" value="1"/>
</dbReference>
<dbReference type="PANTHER" id="PTHR21299">
    <property type="entry name" value="CYTIDYLATE KINASE/PANTOATE-BETA-ALANINE LIGASE"/>
    <property type="match status" value="1"/>
</dbReference>
<dbReference type="PANTHER" id="PTHR21299:SF1">
    <property type="entry name" value="PANTOATE--BETA-ALANINE LIGASE"/>
    <property type="match status" value="1"/>
</dbReference>
<dbReference type="Pfam" id="PF02569">
    <property type="entry name" value="Pantoate_ligase"/>
    <property type="match status" value="1"/>
</dbReference>
<dbReference type="SUPFAM" id="SSF52374">
    <property type="entry name" value="Nucleotidylyl transferase"/>
    <property type="match status" value="1"/>
</dbReference>
<proteinExistence type="inferred from homology"/>
<name>PANC_SALCH</name>
<gene>
    <name evidence="1" type="primary">panC</name>
    <name type="ordered locus">SCH_0181</name>
</gene>
<feature type="chain" id="PRO_0000128263" description="Pantothenate synthetase">
    <location>
        <begin position="1"/>
        <end position="284"/>
    </location>
</feature>
<feature type="active site" description="Proton donor" evidence="1">
    <location>
        <position position="37"/>
    </location>
</feature>
<feature type="binding site" evidence="1">
    <location>
        <begin position="30"/>
        <end position="37"/>
    </location>
    <ligand>
        <name>ATP</name>
        <dbReference type="ChEBI" id="CHEBI:30616"/>
    </ligand>
</feature>
<feature type="binding site" evidence="1">
    <location>
        <position position="61"/>
    </location>
    <ligand>
        <name>(R)-pantoate</name>
        <dbReference type="ChEBI" id="CHEBI:15980"/>
    </ligand>
</feature>
<feature type="binding site" evidence="1">
    <location>
        <position position="61"/>
    </location>
    <ligand>
        <name>beta-alanine</name>
        <dbReference type="ChEBI" id="CHEBI:57966"/>
    </ligand>
</feature>
<feature type="binding site" evidence="1">
    <location>
        <begin position="149"/>
        <end position="152"/>
    </location>
    <ligand>
        <name>ATP</name>
        <dbReference type="ChEBI" id="CHEBI:30616"/>
    </ligand>
</feature>
<feature type="binding site" evidence="1">
    <location>
        <position position="155"/>
    </location>
    <ligand>
        <name>(R)-pantoate</name>
        <dbReference type="ChEBI" id="CHEBI:15980"/>
    </ligand>
</feature>
<feature type="binding site" evidence="1">
    <location>
        <position position="178"/>
    </location>
    <ligand>
        <name>ATP</name>
        <dbReference type="ChEBI" id="CHEBI:30616"/>
    </ligand>
</feature>
<feature type="binding site" evidence="1">
    <location>
        <begin position="186"/>
        <end position="189"/>
    </location>
    <ligand>
        <name>ATP</name>
        <dbReference type="ChEBI" id="CHEBI:30616"/>
    </ligand>
</feature>
<evidence type="ECO:0000255" key="1">
    <source>
        <dbReference type="HAMAP-Rule" id="MF_00158"/>
    </source>
</evidence>
<sequence>MLIIETLPLLRQHIRRLRQEGKRVALVPTMGNLHDGHMKLVDEAKARADVVIVSIFVNPMQFDRPDDLVRYPRTLQEDCEKLNKRKVDYVFAPAVEEIYPQGLEGQTYVDVPGLSTMLEGASRPGHFRGVSTIVSKLFNLIQPDIACFGEKDFQQLALIRKMVADMSYDIEIVGVPIIRAKDGLALSSRNAYLTAEQRKIAPGLYNVMNSIAEKLIAGNRELQEIIAIAEQELNEKGFRADDIQIRDADTLQELTETSKRAVILAAAWLGQARLIDNQSVTLAQ</sequence>
<reference key="1">
    <citation type="journal article" date="2005" name="Nucleic Acids Res.">
        <title>The genome sequence of Salmonella enterica serovar Choleraesuis, a highly invasive and resistant zoonotic pathogen.</title>
        <authorList>
            <person name="Chiu C.-H."/>
            <person name="Tang P."/>
            <person name="Chu C."/>
            <person name="Hu S."/>
            <person name="Bao Q."/>
            <person name="Yu J."/>
            <person name="Chou Y.-Y."/>
            <person name="Wang H.-S."/>
            <person name="Lee Y.-S."/>
        </authorList>
    </citation>
    <scope>NUCLEOTIDE SEQUENCE [LARGE SCALE GENOMIC DNA]</scope>
    <source>
        <strain>SC-B67</strain>
    </source>
</reference>
<organism>
    <name type="scientific">Salmonella choleraesuis (strain SC-B67)</name>
    <dbReference type="NCBI Taxonomy" id="321314"/>
    <lineage>
        <taxon>Bacteria</taxon>
        <taxon>Pseudomonadati</taxon>
        <taxon>Pseudomonadota</taxon>
        <taxon>Gammaproteobacteria</taxon>
        <taxon>Enterobacterales</taxon>
        <taxon>Enterobacteriaceae</taxon>
        <taxon>Salmonella</taxon>
    </lineage>
</organism>